<evidence type="ECO:0000255" key="1">
    <source>
        <dbReference type="HAMAP-Rule" id="MF_00480"/>
    </source>
</evidence>
<evidence type="ECO:0000305" key="2"/>
<gene>
    <name evidence="1" type="primary">rpsG</name>
    <name type="ordered locus">Shew185_0192</name>
</gene>
<keyword id="KW-0687">Ribonucleoprotein</keyword>
<keyword id="KW-0689">Ribosomal protein</keyword>
<keyword id="KW-0694">RNA-binding</keyword>
<keyword id="KW-0699">rRNA-binding</keyword>
<keyword id="KW-0820">tRNA-binding</keyword>
<protein>
    <recommendedName>
        <fullName evidence="1">Small ribosomal subunit protein uS7</fullName>
    </recommendedName>
    <alternativeName>
        <fullName evidence="2">30S ribosomal protein S7</fullName>
    </alternativeName>
</protein>
<sequence>MPRRRVVGQRKILPDPKFHSELLAKFINVIMQDGKKSTAEKIIYKALDVVAEKKSESHLTILEAALDNVRPSVEVKSRRVGGSTYQVPCEVRPVRRNALAMRWLVEAARKRGEKSMALRLAGEMLDASENKGTAVKKREDVHRMAEANKAFAHYRW</sequence>
<comment type="function">
    <text evidence="1">One of the primary rRNA binding proteins, it binds directly to 16S rRNA where it nucleates assembly of the head domain of the 30S subunit. Is located at the subunit interface close to the decoding center, probably blocks exit of the E-site tRNA.</text>
</comment>
<comment type="subunit">
    <text evidence="1">Part of the 30S ribosomal subunit. Contacts proteins S9 and S11.</text>
</comment>
<comment type="similarity">
    <text evidence="1">Belongs to the universal ribosomal protein uS7 family.</text>
</comment>
<accession>A6WHS4</accession>
<dbReference type="EMBL" id="CP000753">
    <property type="protein sequence ID" value="ABS06363.1"/>
    <property type="molecule type" value="Genomic_DNA"/>
</dbReference>
<dbReference type="RefSeq" id="WP_006083604.1">
    <property type="nucleotide sequence ID" value="NC_009665.1"/>
</dbReference>
<dbReference type="SMR" id="A6WHS4"/>
<dbReference type="GeneID" id="11770555"/>
<dbReference type="KEGG" id="sbm:Shew185_0192"/>
<dbReference type="HOGENOM" id="CLU_072226_1_1_6"/>
<dbReference type="GO" id="GO:0015935">
    <property type="term" value="C:small ribosomal subunit"/>
    <property type="evidence" value="ECO:0007669"/>
    <property type="project" value="InterPro"/>
</dbReference>
<dbReference type="GO" id="GO:0019843">
    <property type="term" value="F:rRNA binding"/>
    <property type="evidence" value="ECO:0007669"/>
    <property type="project" value="UniProtKB-UniRule"/>
</dbReference>
<dbReference type="GO" id="GO:0003735">
    <property type="term" value="F:structural constituent of ribosome"/>
    <property type="evidence" value="ECO:0007669"/>
    <property type="project" value="InterPro"/>
</dbReference>
<dbReference type="GO" id="GO:0000049">
    <property type="term" value="F:tRNA binding"/>
    <property type="evidence" value="ECO:0007669"/>
    <property type="project" value="UniProtKB-UniRule"/>
</dbReference>
<dbReference type="GO" id="GO:0006412">
    <property type="term" value="P:translation"/>
    <property type="evidence" value="ECO:0007669"/>
    <property type="project" value="UniProtKB-UniRule"/>
</dbReference>
<dbReference type="CDD" id="cd14869">
    <property type="entry name" value="uS7_Bacteria"/>
    <property type="match status" value="1"/>
</dbReference>
<dbReference type="FunFam" id="1.10.455.10:FF:000001">
    <property type="entry name" value="30S ribosomal protein S7"/>
    <property type="match status" value="1"/>
</dbReference>
<dbReference type="Gene3D" id="1.10.455.10">
    <property type="entry name" value="Ribosomal protein S7 domain"/>
    <property type="match status" value="1"/>
</dbReference>
<dbReference type="HAMAP" id="MF_00480_B">
    <property type="entry name" value="Ribosomal_uS7_B"/>
    <property type="match status" value="1"/>
</dbReference>
<dbReference type="InterPro" id="IPR000235">
    <property type="entry name" value="Ribosomal_uS7"/>
</dbReference>
<dbReference type="InterPro" id="IPR005717">
    <property type="entry name" value="Ribosomal_uS7_bac/org-type"/>
</dbReference>
<dbReference type="InterPro" id="IPR020606">
    <property type="entry name" value="Ribosomal_uS7_CS"/>
</dbReference>
<dbReference type="InterPro" id="IPR023798">
    <property type="entry name" value="Ribosomal_uS7_dom"/>
</dbReference>
<dbReference type="InterPro" id="IPR036823">
    <property type="entry name" value="Ribosomal_uS7_dom_sf"/>
</dbReference>
<dbReference type="NCBIfam" id="TIGR01029">
    <property type="entry name" value="rpsG_bact"/>
    <property type="match status" value="1"/>
</dbReference>
<dbReference type="PANTHER" id="PTHR11205">
    <property type="entry name" value="RIBOSOMAL PROTEIN S7"/>
    <property type="match status" value="1"/>
</dbReference>
<dbReference type="Pfam" id="PF00177">
    <property type="entry name" value="Ribosomal_S7"/>
    <property type="match status" value="1"/>
</dbReference>
<dbReference type="PIRSF" id="PIRSF002122">
    <property type="entry name" value="RPS7p_RPS7a_RPS5e_RPS7o"/>
    <property type="match status" value="1"/>
</dbReference>
<dbReference type="SUPFAM" id="SSF47973">
    <property type="entry name" value="Ribosomal protein S7"/>
    <property type="match status" value="1"/>
</dbReference>
<dbReference type="PROSITE" id="PS00052">
    <property type="entry name" value="RIBOSOMAL_S7"/>
    <property type="match status" value="1"/>
</dbReference>
<proteinExistence type="inferred from homology"/>
<name>RS7_SHEB8</name>
<reference key="1">
    <citation type="submission" date="2007-07" db="EMBL/GenBank/DDBJ databases">
        <title>Complete sequence of chromosome of Shewanella baltica OS185.</title>
        <authorList>
            <consortium name="US DOE Joint Genome Institute"/>
            <person name="Copeland A."/>
            <person name="Lucas S."/>
            <person name="Lapidus A."/>
            <person name="Barry K."/>
            <person name="Glavina del Rio T."/>
            <person name="Dalin E."/>
            <person name="Tice H."/>
            <person name="Pitluck S."/>
            <person name="Sims D."/>
            <person name="Brettin T."/>
            <person name="Bruce D."/>
            <person name="Detter J.C."/>
            <person name="Han C."/>
            <person name="Schmutz J."/>
            <person name="Larimer F."/>
            <person name="Land M."/>
            <person name="Hauser L."/>
            <person name="Kyrpides N."/>
            <person name="Mikhailova N."/>
            <person name="Brettar I."/>
            <person name="Rodrigues J."/>
            <person name="Konstantinidis K."/>
            <person name="Tiedje J."/>
            <person name="Richardson P."/>
        </authorList>
    </citation>
    <scope>NUCLEOTIDE SEQUENCE [LARGE SCALE GENOMIC DNA]</scope>
    <source>
        <strain>OS185</strain>
    </source>
</reference>
<feature type="chain" id="PRO_1000014282" description="Small ribosomal subunit protein uS7">
    <location>
        <begin position="1"/>
        <end position="156"/>
    </location>
</feature>
<organism>
    <name type="scientific">Shewanella baltica (strain OS185)</name>
    <dbReference type="NCBI Taxonomy" id="402882"/>
    <lineage>
        <taxon>Bacteria</taxon>
        <taxon>Pseudomonadati</taxon>
        <taxon>Pseudomonadota</taxon>
        <taxon>Gammaproteobacteria</taxon>
        <taxon>Alteromonadales</taxon>
        <taxon>Shewanellaceae</taxon>
        <taxon>Shewanella</taxon>
    </lineage>
</organism>